<feature type="chain" id="PRO_0000385969" description="GTPase Obg">
    <location>
        <begin position="1"/>
        <end position="346"/>
    </location>
</feature>
<feature type="domain" description="Obg" evidence="2">
    <location>
        <begin position="1"/>
        <end position="159"/>
    </location>
</feature>
<feature type="domain" description="OBG-type G" evidence="1">
    <location>
        <begin position="160"/>
        <end position="335"/>
    </location>
</feature>
<feature type="region of interest" description="Disordered" evidence="3">
    <location>
        <begin position="128"/>
        <end position="148"/>
    </location>
</feature>
<feature type="compositionally biased region" description="Polar residues" evidence="3">
    <location>
        <begin position="130"/>
        <end position="144"/>
    </location>
</feature>
<feature type="binding site" evidence="1">
    <location>
        <begin position="166"/>
        <end position="173"/>
    </location>
    <ligand>
        <name>GTP</name>
        <dbReference type="ChEBI" id="CHEBI:37565"/>
    </ligand>
</feature>
<feature type="binding site" evidence="1">
    <location>
        <position position="173"/>
    </location>
    <ligand>
        <name>Mg(2+)</name>
        <dbReference type="ChEBI" id="CHEBI:18420"/>
    </ligand>
</feature>
<feature type="binding site" evidence="1">
    <location>
        <begin position="191"/>
        <end position="195"/>
    </location>
    <ligand>
        <name>GTP</name>
        <dbReference type="ChEBI" id="CHEBI:37565"/>
    </ligand>
</feature>
<feature type="binding site" evidence="1">
    <location>
        <position position="193"/>
    </location>
    <ligand>
        <name>Mg(2+)</name>
        <dbReference type="ChEBI" id="CHEBI:18420"/>
    </ligand>
</feature>
<feature type="binding site" evidence="1">
    <location>
        <begin position="213"/>
        <end position="216"/>
    </location>
    <ligand>
        <name>GTP</name>
        <dbReference type="ChEBI" id="CHEBI:37565"/>
    </ligand>
</feature>
<feature type="binding site" evidence="1">
    <location>
        <begin position="285"/>
        <end position="288"/>
    </location>
    <ligand>
        <name>GTP</name>
        <dbReference type="ChEBI" id="CHEBI:37565"/>
    </ligand>
</feature>
<feature type="binding site" evidence="1">
    <location>
        <begin position="316"/>
        <end position="318"/>
    </location>
    <ligand>
        <name>GTP</name>
        <dbReference type="ChEBI" id="CHEBI:37565"/>
    </ligand>
</feature>
<protein>
    <recommendedName>
        <fullName evidence="1">GTPase Obg</fullName>
        <ecNumber evidence="1">3.6.5.-</ecNumber>
    </recommendedName>
    <alternativeName>
        <fullName evidence="1">GTP-binding protein Obg</fullName>
    </alternativeName>
</protein>
<comment type="function">
    <text evidence="1">An essential GTPase which binds GTP, GDP and possibly (p)ppGpp with moderate affinity, with high nucleotide exchange rates and a fairly low GTP hydrolysis rate. Plays a role in control of the cell cycle, stress response, ribosome biogenesis and in those bacteria that undergo differentiation, in morphogenesis control.</text>
</comment>
<comment type="cofactor">
    <cofactor evidence="1">
        <name>Mg(2+)</name>
        <dbReference type="ChEBI" id="CHEBI:18420"/>
    </cofactor>
</comment>
<comment type="subunit">
    <text evidence="1">Monomer.</text>
</comment>
<comment type="subcellular location">
    <subcellularLocation>
        <location evidence="1">Cytoplasm</location>
    </subcellularLocation>
</comment>
<comment type="similarity">
    <text evidence="1">Belongs to the TRAFAC class OBG-HflX-like GTPase superfamily. OBG GTPase family.</text>
</comment>
<proteinExistence type="inferred from homology"/>
<dbReference type="EC" id="3.6.5.-" evidence="1"/>
<dbReference type="EMBL" id="CP000544">
    <property type="protein sequence ID" value="ABM62610.1"/>
    <property type="molecule type" value="Genomic_DNA"/>
</dbReference>
<dbReference type="RefSeq" id="WP_011814632.1">
    <property type="nucleotide sequence ID" value="NC_008789.1"/>
</dbReference>
<dbReference type="SMR" id="A1WY48"/>
<dbReference type="STRING" id="349124.Hhal_1846"/>
<dbReference type="KEGG" id="hha:Hhal_1846"/>
<dbReference type="eggNOG" id="COG0536">
    <property type="taxonomic scope" value="Bacteria"/>
</dbReference>
<dbReference type="HOGENOM" id="CLU_011747_2_0_6"/>
<dbReference type="OrthoDB" id="9807318at2"/>
<dbReference type="Proteomes" id="UP000000647">
    <property type="component" value="Chromosome"/>
</dbReference>
<dbReference type="GO" id="GO:0005737">
    <property type="term" value="C:cytoplasm"/>
    <property type="evidence" value="ECO:0007669"/>
    <property type="project" value="UniProtKB-SubCell"/>
</dbReference>
<dbReference type="GO" id="GO:0005525">
    <property type="term" value="F:GTP binding"/>
    <property type="evidence" value="ECO:0007669"/>
    <property type="project" value="UniProtKB-UniRule"/>
</dbReference>
<dbReference type="GO" id="GO:0003924">
    <property type="term" value="F:GTPase activity"/>
    <property type="evidence" value="ECO:0007669"/>
    <property type="project" value="UniProtKB-UniRule"/>
</dbReference>
<dbReference type="GO" id="GO:0000287">
    <property type="term" value="F:magnesium ion binding"/>
    <property type="evidence" value="ECO:0007669"/>
    <property type="project" value="InterPro"/>
</dbReference>
<dbReference type="GO" id="GO:0042254">
    <property type="term" value="P:ribosome biogenesis"/>
    <property type="evidence" value="ECO:0007669"/>
    <property type="project" value="UniProtKB-UniRule"/>
</dbReference>
<dbReference type="CDD" id="cd01898">
    <property type="entry name" value="Obg"/>
    <property type="match status" value="1"/>
</dbReference>
<dbReference type="FunFam" id="2.70.210.12:FF:000001">
    <property type="entry name" value="GTPase Obg"/>
    <property type="match status" value="1"/>
</dbReference>
<dbReference type="Gene3D" id="2.70.210.12">
    <property type="entry name" value="GTP1/OBG domain"/>
    <property type="match status" value="1"/>
</dbReference>
<dbReference type="Gene3D" id="3.40.50.300">
    <property type="entry name" value="P-loop containing nucleotide triphosphate hydrolases"/>
    <property type="match status" value="1"/>
</dbReference>
<dbReference type="HAMAP" id="MF_01454">
    <property type="entry name" value="GTPase_Obg"/>
    <property type="match status" value="1"/>
</dbReference>
<dbReference type="InterPro" id="IPR031167">
    <property type="entry name" value="G_OBG"/>
</dbReference>
<dbReference type="InterPro" id="IPR006073">
    <property type="entry name" value="GTP-bd"/>
</dbReference>
<dbReference type="InterPro" id="IPR014100">
    <property type="entry name" value="GTP-bd_Obg/CgtA"/>
</dbReference>
<dbReference type="InterPro" id="IPR006074">
    <property type="entry name" value="GTP1-OBG_CS"/>
</dbReference>
<dbReference type="InterPro" id="IPR006169">
    <property type="entry name" value="GTP1_OBG_dom"/>
</dbReference>
<dbReference type="InterPro" id="IPR036726">
    <property type="entry name" value="GTP1_OBG_dom_sf"/>
</dbReference>
<dbReference type="InterPro" id="IPR045086">
    <property type="entry name" value="OBG_GTPase"/>
</dbReference>
<dbReference type="InterPro" id="IPR027417">
    <property type="entry name" value="P-loop_NTPase"/>
</dbReference>
<dbReference type="NCBIfam" id="TIGR02729">
    <property type="entry name" value="Obg_CgtA"/>
    <property type="match status" value="1"/>
</dbReference>
<dbReference type="NCBIfam" id="NF008955">
    <property type="entry name" value="PRK12297.1"/>
    <property type="match status" value="1"/>
</dbReference>
<dbReference type="NCBIfam" id="NF008956">
    <property type="entry name" value="PRK12299.1"/>
    <property type="match status" value="1"/>
</dbReference>
<dbReference type="PANTHER" id="PTHR11702">
    <property type="entry name" value="DEVELOPMENTALLY REGULATED GTP-BINDING PROTEIN-RELATED"/>
    <property type="match status" value="1"/>
</dbReference>
<dbReference type="PANTHER" id="PTHR11702:SF31">
    <property type="entry name" value="MITOCHONDRIAL RIBOSOME-ASSOCIATED GTPASE 2"/>
    <property type="match status" value="1"/>
</dbReference>
<dbReference type="Pfam" id="PF01018">
    <property type="entry name" value="GTP1_OBG"/>
    <property type="match status" value="1"/>
</dbReference>
<dbReference type="Pfam" id="PF01926">
    <property type="entry name" value="MMR_HSR1"/>
    <property type="match status" value="1"/>
</dbReference>
<dbReference type="PIRSF" id="PIRSF002401">
    <property type="entry name" value="GTP_bd_Obg/CgtA"/>
    <property type="match status" value="1"/>
</dbReference>
<dbReference type="PRINTS" id="PR00326">
    <property type="entry name" value="GTP1OBG"/>
</dbReference>
<dbReference type="SUPFAM" id="SSF82051">
    <property type="entry name" value="Obg GTP-binding protein N-terminal domain"/>
    <property type="match status" value="1"/>
</dbReference>
<dbReference type="SUPFAM" id="SSF52540">
    <property type="entry name" value="P-loop containing nucleoside triphosphate hydrolases"/>
    <property type="match status" value="1"/>
</dbReference>
<dbReference type="PROSITE" id="PS51710">
    <property type="entry name" value="G_OBG"/>
    <property type="match status" value="1"/>
</dbReference>
<dbReference type="PROSITE" id="PS00905">
    <property type="entry name" value="GTP1_OBG"/>
    <property type="match status" value="1"/>
</dbReference>
<dbReference type="PROSITE" id="PS51883">
    <property type="entry name" value="OBG"/>
    <property type="match status" value="1"/>
</dbReference>
<gene>
    <name evidence="1" type="primary">obg</name>
    <name type="ordered locus">Hhal_1846</name>
</gene>
<sequence length="346" mass="36938">MRFVDEVTFVVRAGDGGDGCVHFRREKYVPRGGPDGGDGGRGGSVYLEGDEGLNTLVDYRHDRFFSAESGEAGGGRQCTGRSGVDRILPVPVGTLVMDEGTGEVIGDVTRDGERLLVAAGGRGGLGNLHFKSSTNRAPRQSTEGTAGESRELRLELQLLADVGLLGMPNVGKSTLIRTISAARPKVADYPFTTLYPQLGVVRYEAQRSFVVADIPGIIEGAAEGAGLGVRFLKHLSRTGLLLHLVDGVAEEERGGDPVADAQTLLAELEAFSPELAQKPRWLVVNRLDALPEEMRAERVAEIARGLGWDGPVYGISGLTGEGVDRLCGDIMNDLEARRREEDGETA</sequence>
<organism>
    <name type="scientific">Halorhodospira halophila (strain DSM 244 / SL1)</name>
    <name type="common">Ectothiorhodospira halophila (strain DSM 244 / SL1)</name>
    <dbReference type="NCBI Taxonomy" id="349124"/>
    <lineage>
        <taxon>Bacteria</taxon>
        <taxon>Pseudomonadati</taxon>
        <taxon>Pseudomonadota</taxon>
        <taxon>Gammaproteobacteria</taxon>
        <taxon>Chromatiales</taxon>
        <taxon>Ectothiorhodospiraceae</taxon>
        <taxon>Halorhodospira</taxon>
    </lineage>
</organism>
<keyword id="KW-0963">Cytoplasm</keyword>
<keyword id="KW-0342">GTP-binding</keyword>
<keyword id="KW-0378">Hydrolase</keyword>
<keyword id="KW-0460">Magnesium</keyword>
<keyword id="KW-0479">Metal-binding</keyword>
<keyword id="KW-0547">Nucleotide-binding</keyword>
<keyword id="KW-1185">Reference proteome</keyword>
<accession>A1WY48</accession>
<name>OBG_HALHL</name>
<evidence type="ECO:0000255" key="1">
    <source>
        <dbReference type="HAMAP-Rule" id="MF_01454"/>
    </source>
</evidence>
<evidence type="ECO:0000255" key="2">
    <source>
        <dbReference type="PROSITE-ProRule" id="PRU01231"/>
    </source>
</evidence>
<evidence type="ECO:0000256" key="3">
    <source>
        <dbReference type="SAM" id="MobiDB-lite"/>
    </source>
</evidence>
<reference key="1">
    <citation type="submission" date="2006-12" db="EMBL/GenBank/DDBJ databases">
        <title>Complete sequence of Halorhodospira halophila SL1.</title>
        <authorList>
            <consortium name="US DOE Joint Genome Institute"/>
            <person name="Copeland A."/>
            <person name="Lucas S."/>
            <person name="Lapidus A."/>
            <person name="Barry K."/>
            <person name="Detter J.C."/>
            <person name="Glavina del Rio T."/>
            <person name="Hammon N."/>
            <person name="Israni S."/>
            <person name="Dalin E."/>
            <person name="Tice H."/>
            <person name="Pitluck S."/>
            <person name="Saunders E."/>
            <person name="Brettin T."/>
            <person name="Bruce D."/>
            <person name="Han C."/>
            <person name="Tapia R."/>
            <person name="Schmutz J."/>
            <person name="Larimer F."/>
            <person name="Land M."/>
            <person name="Hauser L."/>
            <person name="Kyrpides N."/>
            <person name="Mikhailova N."/>
            <person name="Hoff W."/>
            <person name="Richardson P."/>
        </authorList>
    </citation>
    <scope>NUCLEOTIDE SEQUENCE [LARGE SCALE GENOMIC DNA]</scope>
    <source>
        <strain>DSM 244 / SL1</strain>
    </source>
</reference>